<organism>
    <name type="scientific">Lactococcus lactis subsp. lactis (strain IL1403)</name>
    <name type="common">Streptococcus lactis</name>
    <dbReference type="NCBI Taxonomy" id="272623"/>
    <lineage>
        <taxon>Bacteria</taxon>
        <taxon>Bacillati</taxon>
        <taxon>Bacillota</taxon>
        <taxon>Bacilli</taxon>
        <taxon>Lactobacillales</taxon>
        <taxon>Streptococcaceae</taxon>
        <taxon>Lactococcus</taxon>
    </lineage>
</organism>
<reference key="1">
    <citation type="journal article" date="2001" name="Genome Res.">
        <title>The complete genome sequence of the lactic acid bacterium Lactococcus lactis ssp. lactis IL1403.</title>
        <authorList>
            <person name="Bolotin A."/>
            <person name="Wincker P."/>
            <person name="Mauger S."/>
            <person name="Jaillon O."/>
            <person name="Malarme K."/>
            <person name="Weissenbach J."/>
            <person name="Ehrlich S.D."/>
            <person name="Sorokin A."/>
        </authorList>
    </citation>
    <scope>NUCLEOTIDE SEQUENCE [LARGE SCALE GENOMIC DNA]</scope>
    <source>
        <strain>IL1403</strain>
    </source>
</reference>
<protein>
    <recommendedName>
        <fullName evidence="1">Large ribosomal subunit protein uL5</fullName>
    </recommendedName>
    <alternativeName>
        <fullName evidence="2">50S ribosomal protein L5</fullName>
    </alternativeName>
</protein>
<name>RL5_LACLA</name>
<gene>
    <name evidence="1" type="primary">rplE</name>
    <name type="ordered locus">LL2087</name>
    <name type="ORF">L0403</name>
</gene>
<sequence>MTNRLKEKYTNEVVPALTEQFNYTSIMAVPKVDKIVINMGVGDAVNNSKNLDKAVAELALISGQKPLITKAKKSVAAFRLREGMPIGAKVTLRGERMFEFLDKLVTVSLPRVRDFHGVSNKAFDGRGNYTLGVKEQLIFPEINYDDVDKVRGMDIVIVTTANTDEESRELLAKLGMPFAK</sequence>
<dbReference type="EMBL" id="AE005176">
    <property type="protein sequence ID" value="AAK06185.1"/>
    <property type="molecule type" value="Genomic_DNA"/>
</dbReference>
<dbReference type="PIR" id="G86885">
    <property type="entry name" value="G86885"/>
</dbReference>
<dbReference type="RefSeq" id="NP_268244.1">
    <property type="nucleotide sequence ID" value="NC_002662.1"/>
</dbReference>
<dbReference type="RefSeq" id="WP_003129948.1">
    <property type="nucleotide sequence ID" value="NC_002662.1"/>
</dbReference>
<dbReference type="SMR" id="Q9CDX4"/>
<dbReference type="PaxDb" id="272623-L0403"/>
<dbReference type="EnsemblBacteria" id="AAK06185">
    <property type="protein sequence ID" value="AAK06185"/>
    <property type="gene ID" value="L0403"/>
</dbReference>
<dbReference type="GeneID" id="89634434"/>
<dbReference type="KEGG" id="lla:L0403"/>
<dbReference type="PATRIC" id="fig|272623.7.peg.2246"/>
<dbReference type="eggNOG" id="COG0094">
    <property type="taxonomic scope" value="Bacteria"/>
</dbReference>
<dbReference type="HOGENOM" id="CLU_061015_2_1_9"/>
<dbReference type="OrthoDB" id="9806626at2"/>
<dbReference type="Proteomes" id="UP000002196">
    <property type="component" value="Chromosome"/>
</dbReference>
<dbReference type="GO" id="GO:1990904">
    <property type="term" value="C:ribonucleoprotein complex"/>
    <property type="evidence" value="ECO:0007669"/>
    <property type="project" value="UniProtKB-KW"/>
</dbReference>
<dbReference type="GO" id="GO:0005840">
    <property type="term" value="C:ribosome"/>
    <property type="evidence" value="ECO:0007669"/>
    <property type="project" value="UniProtKB-KW"/>
</dbReference>
<dbReference type="GO" id="GO:0019843">
    <property type="term" value="F:rRNA binding"/>
    <property type="evidence" value="ECO:0007669"/>
    <property type="project" value="UniProtKB-UniRule"/>
</dbReference>
<dbReference type="GO" id="GO:0003735">
    <property type="term" value="F:structural constituent of ribosome"/>
    <property type="evidence" value="ECO:0007669"/>
    <property type="project" value="InterPro"/>
</dbReference>
<dbReference type="GO" id="GO:0000049">
    <property type="term" value="F:tRNA binding"/>
    <property type="evidence" value="ECO:0007669"/>
    <property type="project" value="UniProtKB-UniRule"/>
</dbReference>
<dbReference type="GO" id="GO:0006412">
    <property type="term" value="P:translation"/>
    <property type="evidence" value="ECO:0007669"/>
    <property type="project" value="UniProtKB-UniRule"/>
</dbReference>
<dbReference type="FunFam" id="3.30.1440.10:FF:000001">
    <property type="entry name" value="50S ribosomal protein L5"/>
    <property type="match status" value="1"/>
</dbReference>
<dbReference type="Gene3D" id="3.30.1440.10">
    <property type="match status" value="1"/>
</dbReference>
<dbReference type="HAMAP" id="MF_01333_B">
    <property type="entry name" value="Ribosomal_uL5_B"/>
    <property type="match status" value="1"/>
</dbReference>
<dbReference type="InterPro" id="IPR002132">
    <property type="entry name" value="Ribosomal_uL5"/>
</dbReference>
<dbReference type="InterPro" id="IPR020930">
    <property type="entry name" value="Ribosomal_uL5_bac-type"/>
</dbReference>
<dbReference type="InterPro" id="IPR031309">
    <property type="entry name" value="Ribosomal_uL5_C"/>
</dbReference>
<dbReference type="InterPro" id="IPR020929">
    <property type="entry name" value="Ribosomal_uL5_CS"/>
</dbReference>
<dbReference type="InterPro" id="IPR022803">
    <property type="entry name" value="Ribosomal_uL5_dom_sf"/>
</dbReference>
<dbReference type="InterPro" id="IPR031310">
    <property type="entry name" value="Ribosomal_uL5_N"/>
</dbReference>
<dbReference type="NCBIfam" id="NF000585">
    <property type="entry name" value="PRK00010.1"/>
    <property type="match status" value="1"/>
</dbReference>
<dbReference type="PANTHER" id="PTHR11994">
    <property type="entry name" value="60S RIBOSOMAL PROTEIN L11-RELATED"/>
    <property type="match status" value="1"/>
</dbReference>
<dbReference type="Pfam" id="PF00281">
    <property type="entry name" value="Ribosomal_L5"/>
    <property type="match status" value="1"/>
</dbReference>
<dbReference type="Pfam" id="PF00673">
    <property type="entry name" value="Ribosomal_L5_C"/>
    <property type="match status" value="1"/>
</dbReference>
<dbReference type="PIRSF" id="PIRSF002161">
    <property type="entry name" value="Ribosomal_L5"/>
    <property type="match status" value="1"/>
</dbReference>
<dbReference type="SUPFAM" id="SSF55282">
    <property type="entry name" value="RL5-like"/>
    <property type="match status" value="1"/>
</dbReference>
<dbReference type="PROSITE" id="PS00358">
    <property type="entry name" value="RIBOSOMAL_L5"/>
    <property type="match status" value="1"/>
</dbReference>
<keyword id="KW-1185">Reference proteome</keyword>
<keyword id="KW-0687">Ribonucleoprotein</keyword>
<keyword id="KW-0689">Ribosomal protein</keyword>
<keyword id="KW-0694">RNA-binding</keyword>
<keyword id="KW-0699">rRNA-binding</keyword>
<keyword id="KW-0820">tRNA-binding</keyword>
<comment type="function">
    <text evidence="1">This is one of the proteins that bind and probably mediate the attachment of the 5S RNA into the large ribosomal subunit, where it forms part of the central protuberance. In the 70S ribosome it contacts protein S13 of the 30S subunit (bridge B1b), connecting the 2 subunits; this bridge is implicated in subunit movement. Contacts the P site tRNA; the 5S rRNA and some of its associated proteins might help stabilize positioning of ribosome-bound tRNAs.</text>
</comment>
<comment type="subunit">
    <text evidence="1">Part of the 50S ribosomal subunit; part of the 5S rRNA/L5/L18/L25 subcomplex. Contacts the 5S rRNA and the P site tRNA. Forms a bridge to the 30S subunit in the 70S ribosome.</text>
</comment>
<comment type="similarity">
    <text evidence="1">Belongs to the universal ribosomal protein uL5 family.</text>
</comment>
<proteinExistence type="inferred from homology"/>
<evidence type="ECO:0000255" key="1">
    <source>
        <dbReference type="HAMAP-Rule" id="MF_01333"/>
    </source>
</evidence>
<evidence type="ECO:0000305" key="2"/>
<accession>Q9CDX4</accession>
<feature type="chain" id="PRO_0000124938" description="Large ribosomal subunit protein uL5">
    <location>
        <begin position="1"/>
        <end position="180"/>
    </location>
</feature>